<protein>
    <recommendedName>
        <fullName evidence="1">GMP reductase</fullName>
        <ecNumber evidence="1">1.7.1.7</ecNumber>
    </recommendedName>
    <alternativeName>
        <fullName evidence="1">Guanosine 5'-monophosphate oxidoreductase</fullName>
        <shortName evidence="1">Guanosine monophosphate reductase</shortName>
    </alternativeName>
</protein>
<evidence type="ECO:0000255" key="1">
    <source>
        <dbReference type="HAMAP-Rule" id="MF_01511"/>
    </source>
</evidence>
<name>GUAC_ACIET</name>
<dbReference type="EC" id="1.7.1.7" evidence="1"/>
<dbReference type="EMBL" id="CP001392">
    <property type="protein sequence ID" value="ACM34114.1"/>
    <property type="molecule type" value="Genomic_DNA"/>
</dbReference>
<dbReference type="RefSeq" id="WP_015914016.1">
    <property type="nucleotide sequence ID" value="NC_011992.1"/>
</dbReference>
<dbReference type="SMR" id="B9ME75"/>
<dbReference type="KEGG" id="dia:Dtpsy_2679"/>
<dbReference type="eggNOG" id="COG0516">
    <property type="taxonomic scope" value="Bacteria"/>
</dbReference>
<dbReference type="HOGENOM" id="CLU_022552_5_0_4"/>
<dbReference type="Proteomes" id="UP000000450">
    <property type="component" value="Chromosome"/>
</dbReference>
<dbReference type="GO" id="GO:0005829">
    <property type="term" value="C:cytosol"/>
    <property type="evidence" value="ECO:0007669"/>
    <property type="project" value="TreeGrafter"/>
</dbReference>
<dbReference type="GO" id="GO:1902560">
    <property type="term" value="C:GMP reductase complex"/>
    <property type="evidence" value="ECO:0007669"/>
    <property type="project" value="InterPro"/>
</dbReference>
<dbReference type="GO" id="GO:0003920">
    <property type="term" value="F:GMP reductase activity"/>
    <property type="evidence" value="ECO:0007669"/>
    <property type="project" value="UniProtKB-UniRule"/>
</dbReference>
<dbReference type="GO" id="GO:0006163">
    <property type="term" value="P:purine nucleotide metabolic process"/>
    <property type="evidence" value="ECO:0007669"/>
    <property type="project" value="UniProtKB-UniRule"/>
</dbReference>
<dbReference type="CDD" id="cd00381">
    <property type="entry name" value="IMPDH"/>
    <property type="match status" value="1"/>
</dbReference>
<dbReference type="Gene3D" id="3.20.20.70">
    <property type="entry name" value="Aldolase class I"/>
    <property type="match status" value="1"/>
</dbReference>
<dbReference type="HAMAP" id="MF_01511">
    <property type="entry name" value="GMP_reduct_type2"/>
    <property type="match status" value="1"/>
</dbReference>
<dbReference type="InterPro" id="IPR013785">
    <property type="entry name" value="Aldolase_TIM"/>
</dbReference>
<dbReference type="InterPro" id="IPR050139">
    <property type="entry name" value="GMP_reductase"/>
</dbReference>
<dbReference type="InterPro" id="IPR005994">
    <property type="entry name" value="GuaC_type_2"/>
</dbReference>
<dbReference type="InterPro" id="IPR015875">
    <property type="entry name" value="IMP_DH/GMP_Rdtase_CS"/>
</dbReference>
<dbReference type="InterPro" id="IPR001093">
    <property type="entry name" value="IMP_DH_GMPRt"/>
</dbReference>
<dbReference type="NCBIfam" id="TIGR01306">
    <property type="entry name" value="GMP_reduct_2"/>
    <property type="match status" value="1"/>
</dbReference>
<dbReference type="NCBIfam" id="NF003966">
    <property type="entry name" value="PRK05458.1"/>
    <property type="match status" value="1"/>
</dbReference>
<dbReference type="PANTHER" id="PTHR43170">
    <property type="entry name" value="GMP REDUCTASE"/>
    <property type="match status" value="1"/>
</dbReference>
<dbReference type="PANTHER" id="PTHR43170:SF5">
    <property type="entry name" value="GMP REDUCTASE"/>
    <property type="match status" value="1"/>
</dbReference>
<dbReference type="Pfam" id="PF00478">
    <property type="entry name" value="IMPDH"/>
    <property type="match status" value="1"/>
</dbReference>
<dbReference type="PIRSF" id="PIRSF036500">
    <property type="entry name" value="GMP_red_Firmic"/>
    <property type="match status" value="1"/>
</dbReference>
<dbReference type="SMART" id="SM01240">
    <property type="entry name" value="IMPDH"/>
    <property type="match status" value="1"/>
</dbReference>
<dbReference type="SUPFAM" id="SSF51412">
    <property type="entry name" value="Inosine monophosphate dehydrogenase (IMPDH)"/>
    <property type="match status" value="1"/>
</dbReference>
<dbReference type="PROSITE" id="PS00487">
    <property type="entry name" value="IMP_DH_GMP_RED"/>
    <property type="match status" value="1"/>
</dbReference>
<proteinExistence type="inferred from homology"/>
<feature type="chain" id="PRO_1000185053" description="GMP reductase">
    <location>
        <begin position="1"/>
        <end position="325"/>
    </location>
</feature>
<feature type="active site" description="Thioimidate intermediate" evidence="1">
    <location>
        <position position="173"/>
    </location>
</feature>
<feature type="binding site" evidence="1">
    <location>
        <begin position="202"/>
        <end position="225"/>
    </location>
    <ligand>
        <name>NADP(+)</name>
        <dbReference type="ChEBI" id="CHEBI:58349"/>
    </ligand>
</feature>
<keyword id="KW-0521">NADP</keyword>
<keyword id="KW-0560">Oxidoreductase</keyword>
<keyword id="KW-1185">Reference proteome</keyword>
<accession>B9ME75</accession>
<sequence length="325" mass="35699">MEIFDYDNILLLPRKCRVESRSECDTSVELGGRRFRLPVVPANMKTVVDEKICTWLAQNGYFYVMHRFDLDNVQFVKDMHAQGCFASISLGVKQPDYDTVDRFVAEGICPEYITIDIAHGHADSVKNMITYLKAKIPAAFVIAGNVGTPEAVIDLENWGADATKVGIGPGKVCITKLKTGFGTGGWQLSALKWCARVATKPIIADGGIRSHGDIAKSVRFGATMVMVGSLFAGHEESPGKTVEVDGELYKEYYGSASDFNKGEYKHVEGKRILEPIKGKLADTLTEMEQDIQSSISYSGGKKLMDIRKVNYVILGGDNAGEHLLM</sequence>
<gene>
    <name evidence="1" type="primary">guaC</name>
    <name type="ordered locus">Dtpsy_2679</name>
</gene>
<comment type="function">
    <text evidence="1">Catalyzes the irreversible NADPH-dependent deamination of GMP to IMP. It functions in the conversion of nucleobase, nucleoside and nucleotide derivatives of G to A nucleotides, and in maintaining the intracellular balance of A and G nucleotides.</text>
</comment>
<comment type="catalytic activity">
    <reaction evidence="1">
        <text>IMP + NH4(+) + NADP(+) = GMP + NADPH + 2 H(+)</text>
        <dbReference type="Rhea" id="RHEA:17185"/>
        <dbReference type="ChEBI" id="CHEBI:15378"/>
        <dbReference type="ChEBI" id="CHEBI:28938"/>
        <dbReference type="ChEBI" id="CHEBI:57783"/>
        <dbReference type="ChEBI" id="CHEBI:58053"/>
        <dbReference type="ChEBI" id="CHEBI:58115"/>
        <dbReference type="ChEBI" id="CHEBI:58349"/>
        <dbReference type="EC" id="1.7.1.7"/>
    </reaction>
</comment>
<comment type="similarity">
    <text evidence="1">Belongs to the IMPDH/GMPR family. GuaC type 2 subfamily.</text>
</comment>
<reference key="1">
    <citation type="submission" date="2009-01" db="EMBL/GenBank/DDBJ databases">
        <title>Complete sequence of Diaphorobacter sp. TPSY.</title>
        <authorList>
            <consortium name="US DOE Joint Genome Institute"/>
            <person name="Lucas S."/>
            <person name="Copeland A."/>
            <person name="Lapidus A."/>
            <person name="Glavina del Rio T."/>
            <person name="Tice H."/>
            <person name="Bruce D."/>
            <person name="Goodwin L."/>
            <person name="Pitluck S."/>
            <person name="Chertkov O."/>
            <person name="Brettin T."/>
            <person name="Detter J.C."/>
            <person name="Han C."/>
            <person name="Larimer F."/>
            <person name="Land M."/>
            <person name="Hauser L."/>
            <person name="Kyrpides N."/>
            <person name="Mikhailova N."/>
            <person name="Coates J.D."/>
        </authorList>
    </citation>
    <scope>NUCLEOTIDE SEQUENCE [LARGE SCALE GENOMIC DNA]</scope>
    <source>
        <strain>TPSY</strain>
    </source>
</reference>
<organism>
    <name type="scientific">Acidovorax ebreus (strain TPSY)</name>
    <name type="common">Diaphorobacter sp. (strain TPSY)</name>
    <dbReference type="NCBI Taxonomy" id="535289"/>
    <lineage>
        <taxon>Bacteria</taxon>
        <taxon>Pseudomonadati</taxon>
        <taxon>Pseudomonadota</taxon>
        <taxon>Betaproteobacteria</taxon>
        <taxon>Burkholderiales</taxon>
        <taxon>Comamonadaceae</taxon>
        <taxon>Diaphorobacter</taxon>
    </lineage>
</organism>